<reference key="1">
    <citation type="journal article" date="1988" name="Gene">
        <title>Chicken chromosomal protein HMG-14 and HMG-17 cDNA clones: isolation, characterization and sequence comparison.</title>
        <authorList>
            <person name="Dodgson J.B."/>
            <person name="Browne D.L."/>
            <person name="Black A.J."/>
        </authorList>
    </citation>
    <scope>NUCLEOTIDE SEQUENCE [GENOMIC DNA]</scope>
</reference>
<reference key="2">
    <citation type="journal article" date="1993" name="Gene">
        <title>The gene encoding chicken chromosomal protein HMG-14a is transcribed into multiple mRNAs.</title>
        <authorList>
            <person name="Browne D.L."/>
            <person name="Dodgson J.B."/>
        </authorList>
    </citation>
    <scope>NUCLEOTIDE SEQUENCE [GENOMIC DNA]</scope>
    <source>
        <strain>White leghorn</strain>
    </source>
</reference>
<proteinExistence type="inferred from homology"/>
<name>HM14A_CHICK</name>
<evidence type="ECO:0000256" key="1">
    <source>
        <dbReference type="SAM" id="MobiDB-lite"/>
    </source>
</evidence>
<evidence type="ECO:0000305" key="2"/>
<dbReference type="EMBL" id="M26675">
    <property type="protein sequence ID" value="AAA48815.1"/>
    <property type="molecule type" value="Genomic_DNA"/>
</dbReference>
<dbReference type="EMBL" id="X63083">
    <property type="protein sequence ID" value="CAA44804.1"/>
    <property type="molecule type" value="Genomic_DNA"/>
</dbReference>
<dbReference type="EMBL" id="X63084">
    <property type="protein sequence ID" value="CAA44804.1"/>
    <property type="status" value="JOINED"/>
    <property type="molecule type" value="Genomic_DNA"/>
</dbReference>
<dbReference type="EMBL" id="X63085">
    <property type="protein sequence ID" value="CAA44804.1"/>
    <property type="status" value="JOINED"/>
    <property type="molecule type" value="Genomic_DNA"/>
</dbReference>
<dbReference type="EMBL" id="X63086">
    <property type="protein sequence ID" value="CAA44804.1"/>
    <property type="status" value="JOINED"/>
    <property type="molecule type" value="Genomic_DNA"/>
</dbReference>
<dbReference type="EMBL" id="X63087">
    <property type="protein sequence ID" value="CAA44804.1"/>
    <property type="status" value="JOINED"/>
    <property type="molecule type" value="Genomic_DNA"/>
</dbReference>
<dbReference type="PIR" id="S22122">
    <property type="entry name" value="NSCHH4"/>
</dbReference>
<dbReference type="RefSeq" id="NP_001383326.1">
    <property type="nucleotide sequence ID" value="NM_001396397.1"/>
</dbReference>
<dbReference type="RefSeq" id="NP_001383503.1">
    <property type="nucleotide sequence ID" value="NM_001396574.1"/>
</dbReference>
<dbReference type="RefSeq" id="XP_015134007.1">
    <property type="nucleotide sequence ID" value="XM_015278521.4"/>
</dbReference>
<dbReference type="RefSeq" id="XP_015134008.1">
    <property type="nucleotide sequence ID" value="XM_015278522.1"/>
</dbReference>
<dbReference type="RefSeq" id="XP_040526191.1">
    <property type="nucleotide sequence ID" value="XM_040670257.2"/>
</dbReference>
<dbReference type="STRING" id="9031.ENSGALP00000011539"/>
<dbReference type="PaxDb" id="9031-ENSGALP00000011539"/>
<dbReference type="Ensembl" id="ENSGALT00010046104.1">
    <property type="protein sequence ID" value="ENSGALP00010027482.1"/>
    <property type="gene ID" value="ENSGALG00010019040.1"/>
</dbReference>
<dbReference type="GeneID" id="422278"/>
<dbReference type="KEGG" id="gga:422278"/>
<dbReference type="CTD" id="79366"/>
<dbReference type="VEuPathDB" id="HostDB:geneid_422278"/>
<dbReference type="eggNOG" id="ENOG502S5FK">
    <property type="taxonomic scope" value="Eukaryota"/>
</dbReference>
<dbReference type="GeneTree" id="ENSGT00950000182802"/>
<dbReference type="InParanoid" id="P12902"/>
<dbReference type="OMA" id="ILQHICV"/>
<dbReference type="OrthoDB" id="9049785at2759"/>
<dbReference type="PRO" id="PR:P12902"/>
<dbReference type="Proteomes" id="UP000000539">
    <property type="component" value="Chromosome 4"/>
</dbReference>
<dbReference type="Bgee" id="ENSGALG00000007131">
    <property type="expression patterns" value="Expressed in colon and 12 other cell types or tissues"/>
</dbReference>
<dbReference type="GO" id="GO:0000785">
    <property type="term" value="C:chromatin"/>
    <property type="evidence" value="ECO:0007669"/>
    <property type="project" value="InterPro"/>
</dbReference>
<dbReference type="GO" id="GO:0005634">
    <property type="term" value="C:nucleus"/>
    <property type="evidence" value="ECO:0000318"/>
    <property type="project" value="GO_Central"/>
</dbReference>
<dbReference type="GO" id="GO:0003682">
    <property type="term" value="F:chromatin binding"/>
    <property type="evidence" value="ECO:0000318"/>
    <property type="project" value="GO_Central"/>
</dbReference>
<dbReference type="GO" id="GO:0031492">
    <property type="term" value="F:nucleosomal DNA binding"/>
    <property type="evidence" value="ECO:0007669"/>
    <property type="project" value="InterPro"/>
</dbReference>
<dbReference type="GO" id="GO:0006325">
    <property type="term" value="P:chromatin organization"/>
    <property type="evidence" value="ECO:0000318"/>
    <property type="project" value="GO_Central"/>
</dbReference>
<dbReference type="InterPro" id="IPR000079">
    <property type="entry name" value="HMGN_fam"/>
</dbReference>
<dbReference type="PANTHER" id="PTHR23087:SF13">
    <property type="entry name" value="NON-HISTONE CHROMOSOMAL PROTEIN HMG-17"/>
    <property type="match status" value="1"/>
</dbReference>
<dbReference type="PANTHER" id="PTHR23087">
    <property type="entry name" value="NONHISTONE CHROMOSOMAL PROTEIN HMG"/>
    <property type="match status" value="1"/>
</dbReference>
<dbReference type="Pfam" id="PF01101">
    <property type="entry name" value="HMG14_17"/>
    <property type="match status" value="1"/>
</dbReference>
<dbReference type="PRINTS" id="PR00925">
    <property type="entry name" value="NONHISHMG17"/>
</dbReference>
<dbReference type="SMART" id="SM00527">
    <property type="entry name" value="HMG17"/>
    <property type="match status" value="1"/>
</dbReference>
<dbReference type="PROSITE" id="PS00355">
    <property type="entry name" value="HMG14_17"/>
    <property type="match status" value="1"/>
</dbReference>
<sequence>MPKRKAPAEGEAKEEPKRRSARLSAKPAPPKPEPKPKKAAPKKEKAANDKKEDKKAATKGKKGAKGKDETKQEDAKEENHSENGDTKTNEAPAAEASDDKEAKSE</sequence>
<organism>
    <name type="scientific">Gallus gallus</name>
    <name type="common">Chicken</name>
    <dbReference type="NCBI Taxonomy" id="9031"/>
    <lineage>
        <taxon>Eukaryota</taxon>
        <taxon>Metazoa</taxon>
        <taxon>Chordata</taxon>
        <taxon>Craniata</taxon>
        <taxon>Vertebrata</taxon>
        <taxon>Euteleostomi</taxon>
        <taxon>Archelosauria</taxon>
        <taxon>Archosauria</taxon>
        <taxon>Dinosauria</taxon>
        <taxon>Saurischia</taxon>
        <taxon>Theropoda</taxon>
        <taxon>Coelurosauria</taxon>
        <taxon>Aves</taxon>
        <taxon>Neognathae</taxon>
        <taxon>Galloanserae</taxon>
        <taxon>Galliformes</taxon>
        <taxon>Phasianidae</taxon>
        <taxon>Phasianinae</taxon>
        <taxon>Gallus</taxon>
    </lineage>
</organism>
<feature type="initiator methionine" description="Removed">
    <location>
        <position position="1"/>
    </location>
</feature>
<feature type="chain" id="PRO_0000206694" description="Non-histone chromosomal protein HMG-14A">
    <location>
        <begin position="2"/>
        <end position="105"/>
    </location>
</feature>
<feature type="region of interest" description="Disordered" evidence="1">
    <location>
        <begin position="1"/>
        <end position="105"/>
    </location>
</feature>
<feature type="compositionally biased region" description="Basic and acidic residues" evidence="1">
    <location>
        <begin position="1"/>
        <end position="18"/>
    </location>
</feature>
<feature type="compositionally biased region" description="Basic and acidic residues" evidence="1">
    <location>
        <begin position="32"/>
        <end position="56"/>
    </location>
</feature>
<feature type="compositionally biased region" description="Basic and acidic residues" evidence="1">
    <location>
        <begin position="65"/>
        <end position="88"/>
    </location>
</feature>
<comment type="function">
    <text>Binds to the inner side of the nucleosomal DNA thus altering the interaction between the DNA and the histone octamer. May be involved in the process which maintains transcribable genes in a unique chromatin conformation.</text>
</comment>
<comment type="subcellular location">
    <subcellularLocation>
        <location>Nucleus</location>
    </subcellularLocation>
</comment>
<comment type="miscellaneous">
    <text>There are two HMG-14 proteins in chicken: HMG-14A the major component, and HMG-14B the minor component.</text>
</comment>
<comment type="similarity">
    <text evidence="2">Belongs to the HMGN family.</text>
</comment>
<protein>
    <recommendedName>
        <fullName>Non-histone chromosomal protein HMG-14A</fullName>
    </recommendedName>
</protein>
<accession>P12902</accession>
<keyword id="KW-0238">DNA-binding</keyword>
<keyword id="KW-0539">Nucleus</keyword>
<keyword id="KW-1185">Reference proteome</keyword>